<gene>
    <name evidence="1" type="primary">katG</name>
    <name type="ordered locus">RPA0429</name>
</gene>
<comment type="function">
    <text evidence="1">Bifunctional enzyme with both catalase and broad-spectrum peroxidase activity.</text>
</comment>
<comment type="catalytic activity">
    <reaction evidence="1">
        <text>H2O2 + AH2 = A + 2 H2O</text>
        <dbReference type="Rhea" id="RHEA:30275"/>
        <dbReference type="ChEBI" id="CHEBI:13193"/>
        <dbReference type="ChEBI" id="CHEBI:15377"/>
        <dbReference type="ChEBI" id="CHEBI:16240"/>
        <dbReference type="ChEBI" id="CHEBI:17499"/>
        <dbReference type="EC" id="1.11.1.21"/>
    </reaction>
</comment>
<comment type="catalytic activity">
    <reaction evidence="1">
        <text>2 H2O2 = O2 + 2 H2O</text>
        <dbReference type="Rhea" id="RHEA:20309"/>
        <dbReference type="ChEBI" id="CHEBI:15377"/>
        <dbReference type="ChEBI" id="CHEBI:15379"/>
        <dbReference type="ChEBI" id="CHEBI:16240"/>
        <dbReference type="EC" id="1.11.1.21"/>
    </reaction>
</comment>
<comment type="cofactor">
    <cofactor evidence="1">
        <name>heme b</name>
        <dbReference type="ChEBI" id="CHEBI:60344"/>
    </cofactor>
    <text evidence="1">Binds 1 heme b (iron(II)-protoporphyrin IX) group per dimer.</text>
</comment>
<comment type="subunit">
    <text evidence="1">Homodimer or homotetramer.</text>
</comment>
<comment type="PTM">
    <text evidence="1">Formation of the three residue Trp-Tyr-Met cross-link is important for the catalase, but not the peroxidase activity of the enzyme.</text>
</comment>
<comment type="similarity">
    <text evidence="1">Belongs to the peroxidase family. Peroxidase/catalase subfamily.</text>
</comment>
<feature type="chain" id="PRO_0000354892" description="Catalase-peroxidase">
    <location>
        <begin position="1"/>
        <end position="736"/>
    </location>
</feature>
<feature type="region of interest" description="Disordered" evidence="2">
    <location>
        <begin position="1"/>
        <end position="26"/>
    </location>
</feature>
<feature type="compositionally biased region" description="Basic and acidic residues" evidence="2">
    <location>
        <begin position="1"/>
        <end position="10"/>
    </location>
</feature>
<feature type="active site" description="Proton acceptor" evidence="1">
    <location>
        <position position="97"/>
    </location>
</feature>
<feature type="binding site" description="axial binding residue" evidence="1">
    <location>
        <position position="259"/>
    </location>
    <ligand>
        <name>heme b</name>
        <dbReference type="ChEBI" id="CHEBI:60344"/>
    </ligand>
    <ligandPart>
        <name>Fe</name>
        <dbReference type="ChEBI" id="CHEBI:18248"/>
    </ligandPart>
</feature>
<feature type="site" description="Transition state stabilizer" evidence="1">
    <location>
        <position position="93"/>
    </location>
</feature>
<feature type="cross-link" description="Tryptophyl-tyrosyl-methioninium (Trp-Tyr) (with M-244)" evidence="1">
    <location>
        <begin position="96"/>
        <end position="218"/>
    </location>
</feature>
<feature type="cross-link" description="Tryptophyl-tyrosyl-methioninium (Tyr-Met) (with W-96)" evidence="1">
    <location>
        <begin position="218"/>
        <end position="244"/>
    </location>
</feature>
<sequence length="736" mass="80870">MDAKTDDKGAGKCPFSGGSHGHRNRDWWPDQLDISVLHNNSKKSDPMGAAFNYAEEFKKLDLEAVKKDLHALMTDSQEWWPADFGHYGGLFVRMAWHSAGTYRITDGRGGAGAGQQRFAPLNSWPDNANLDKARRLLWPIKQKYGSKISWADLMVLTGNVALESMGFKTFGFAGGRADVWEPEELYWGPEGTWLGDERYSGERQLAEPLGAVQMGLIYVNPEGPNGNPDPVAAAKDIRETFARMAMDDEETVALIAGGHTFGKTHGAGDPSLIGPAPEGGLLEEQGLGWTSKYGTGFGADAITGGPEVIWTQTPTQWSNHFFENLFGFEWELDKSPAGAKQWKAKGAEATVPDPFDPAKKRVPTMLTTDLSLRFDPIYEKISRRFLENPDQFADAFARAWFKLTHRDMGPRERYLGPEVPKEELIWQDPIPAVNHELVGEADIEALKAKILASGLSVAQLVSTAWASASTFRGSDKRGGANGARIRLAPQKDWEVNQPAELAQVLGKLEAIQGEFNGAQKDGKKVSLADLIVLGGAAAIEKAAKDAGTAVKVPFTPGRMDASAEQTDVESFKVLEPRADGFRNYINTKRHQFMHPEEALVDKAQLLTLTGPELTVLVGGLRVLGANYAHSTHGVLTERPEKLTNDFFVNLLDMGTKWTKANGEVEIYEGRDRKNGELKWTGTRVDLVFGSHSQLRAFAEVYACSDAQEKFVSDFVAAWSKVMNADRFDIVAKKQAA</sequence>
<proteinExistence type="inferred from homology"/>
<name>KATG_RHOPA</name>
<protein>
    <recommendedName>
        <fullName evidence="1">Catalase-peroxidase</fullName>
        <shortName evidence="1">CP</shortName>
        <ecNumber evidence="1">1.11.1.21</ecNumber>
    </recommendedName>
    <alternativeName>
        <fullName evidence="1">Peroxidase/catalase</fullName>
    </alternativeName>
</protein>
<evidence type="ECO:0000255" key="1">
    <source>
        <dbReference type="HAMAP-Rule" id="MF_01961"/>
    </source>
</evidence>
<evidence type="ECO:0000256" key="2">
    <source>
        <dbReference type="SAM" id="MobiDB-lite"/>
    </source>
</evidence>
<keyword id="KW-0349">Heme</keyword>
<keyword id="KW-0376">Hydrogen peroxide</keyword>
<keyword id="KW-0408">Iron</keyword>
<keyword id="KW-0479">Metal-binding</keyword>
<keyword id="KW-0560">Oxidoreductase</keyword>
<keyword id="KW-0575">Peroxidase</keyword>
<organism>
    <name type="scientific">Rhodopseudomonas palustris (strain ATCC BAA-98 / CGA009)</name>
    <dbReference type="NCBI Taxonomy" id="258594"/>
    <lineage>
        <taxon>Bacteria</taxon>
        <taxon>Pseudomonadati</taxon>
        <taxon>Pseudomonadota</taxon>
        <taxon>Alphaproteobacteria</taxon>
        <taxon>Hyphomicrobiales</taxon>
        <taxon>Nitrobacteraceae</taxon>
        <taxon>Rhodopseudomonas</taxon>
    </lineage>
</organism>
<accession>Q6NCP1</accession>
<reference key="1">
    <citation type="journal article" date="2004" name="Nat. Biotechnol.">
        <title>Complete genome sequence of the metabolically versatile photosynthetic bacterium Rhodopseudomonas palustris.</title>
        <authorList>
            <person name="Larimer F.W."/>
            <person name="Chain P."/>
            <person name="Hauser L."/>
            <person name="Lamerdin J.E."/>
            <person name="Malfatti S."/>
            <person name="Do L."/>
            <person name="Land M.L."/>
            <person name="Pelletier D.A."/>
            <person name="Beatty J.T."/>
            <person name="Lang A.S."/>
            <person name="Tabita F.R."/>
            <person name="Gibson J.L."/>
            <person name="Hanson T.E."/>
            <person name="Bobst C."/>
            <person name="Torres y Torres J.L."/>
            <person name="Peres C."/>
            <person name="Harrison F.H."/>
            <person name="Gibson J."/>
            <person name="Harwood C.S."/>
        </authorList>
    </citation>
    <scope>NUCLEOTIDE SEQUENCE [LARGE SCALE GENOMIC DNA]</scope>
    <source>
        <strain>ATCC BAA-98 / CGA009</strain>
    </source>
</reference>
<dbReference type="EC" id="1.11.1.21" evidence="1"/>
<dbReference type="EMBL" id="BX572594">
    <property type="protein sequence ID" value="CAE25873.1"/>
    <property type="molecule type" value="Genomic_DNA"/>
</dbReference>
<dbReference type="RefSeq" id="WP_011155997.1">
    <property type="nucleotide sequence ID" value="NZ_CP116810.1"/>
</dbReference>
<dbReference type="SMR" id="Q6NCP1"/>
<dbReference type="STRING" id="258594.RPA0429"/>
<dbReference type="PeroxiBase" id="2335">
    <property type="entry name" value="RpCP01_CGA009"/>
</dbReference>
<dbReference type="GeneID" id="66891444"/>
<dbReference type="eggNOG" id="COG0376">
    <property type="taxonomic scope" value="Bacteria"/>
</dbReference>
<dbReference type="HOGENOM" id="CLU_025424_2_0_5"/>
<dbReference type="PhylomeDB" id="Q6NCP1"/>
<dbReference type="GO" id="GO:0005829">
    <property type="term" value="C:cytosol"/>
    <property type="evidence" value="ECO:0007669"/>
    <property type="project" value="TreeGrafter"/>
</dbReference>
<dbReference type="GO" id="GO:0004096">
    <property type="term" value="F:catalase activity"/>
    <property type="evidence" value="ECO:0007669"/>
    <property type="project" value="UniProtKB-UniRule"/>
</dbReference>
<dbReference type="GO" id="GO:0020037">
    <property type="term" value="F:heme binding"/>
    <property type="evidence" value="ECO:0007669"/>
    <property type="project" value="InterPro"/>
</dbReference>
<dbReference type="GO" id="GO:0046872">
    <property type="term" value="F:metal ion binding"/>
    <property type="evidence" value="ECO:0007669"/>
    <property type="project" value="UniProtKB-KW"/>
</dbReference>
<dbReference type="GO" id="GO:0070301">
    <property type="term" value="P:cellular response to hydrogen peroxide"/>
    <property type="evidence" value="ECO:0007669"/>
    <property type="project" value="TreeGrafter"/>
</dbReference>
<dbReference type="GO" id="GO:0042744">
    <property type="term" value="P:hydrogen peroxide catabolic process"/>
    <property type="evidence" value="ECO:0007669"/>
    <property type="project" value="UniProtKB-KW"/>
</dbReference>
<dbReference type="CDD" id="cd00649">
    <property type="entry name" value="catalase_peroxidase_1"/>
    <property type="match status" value="1"/>
</dbReference>
<dbReference type="CDD" id="cd08200">
    <property type="entry name" value="catalase_peroxidase_2"/>
    <property type="match status" value="1"/>
</dbReference>
<dbReference type="FunFam" id="1.10.420.10:FF:000002">
    <property type="entry name" value="Catalase-peroxidase"/>
    <property type="match status" value="1"/>
</dbReference>
<dbReference type="FunFam" id="1.10.420.10:FF:000004">
    <property type="entry name" value="Catalase-peroxidase"/>
    <property type="match status" value="1"/>
</dbReference>
<dbReference type="FunFam" id="1.10.520.10:FF:000002">
    <property type="entry name" value="Catalase-peroxidase"/>
    <property type="match status" value="1"/>
</dbReference>
<dbReference type="FunFam" id="1.10.520.10:FF:000004">
    <property type="entry name" value="Catalase-peroxidase"/>
    <property type="match status" value="1"/>
</dbReference>
<dbReference type="Gene3D" id="1.10.520.10">
    <property type="match status" value="2"/>
</dbReference>
<dbReference type="Gene3D" id="1.10.420.10">
    <property type="entry name" value="Peroxidase, domain 2"/>
    <property type="match status" value="2"/>
</dbReference>
<dbReference type="HAMAP" id="MF_01961">
    <property type="entry name" value="Catal_peroxid"/>
    <property type="match status" value="1"/>
</dbReference>
<dbReference type="InterPro" id="IPR000763">
    <property type="entry name" value="Catalase_peroxidase"/>
</dbReference>
<dbReference type="InterPro" id="IPR002016">
    <property type="entry name" value="Haem_peroxidase"/>
</dbReference>
<dbReference type="InterPro" id="IPR010255">
    <property type="entry name" value="Haem_peroxidase_sf"/>
</dbReference>
<dbReference type="InterPro" id="IPR019794">
    <property type="entry name" value="Peroxidases_AS"/>
</dbReference>
<dbReference type="InterPro" id="IPR019793">
    <property type="entry name" value="Peroxidases_heam-ligand_BS"/>
</dbReference>
<dbReference type="NCBIfam" id="TIGR00198">
    <property type="entry name" value="cat_per_HPI"/>
    <property type="match status" value="1"/>
</dbReference>
<dbReference type="NCBIfam" id="NF011635">
    <property type="entry name" value="PRK15061.1"/>
    <property type="match status" value="1"/>
</dbReference>
<dbReference type="PANTHER" id="PTHR30555:SF0">
    <property type="entry name" value="CATALASE-PEROXIDASE"/>
    <property type="match status" value="1"/>
</dbReference>
<dbReference type="PANTHER" id="PTHR30555">
    <property type="entry name" value="HYDROPEROXIDASE I, BIFUNCTIONAL CATALASE-PEROXIDASE"/>
    <property type="match status" value="1"/>
</dbReference>
<dbReference type="Pfam" id="PF00141">
    <property type="entry name" value="peroxidase"/>
    <property type="match status" value="2"/>
</dbReference>
<dbReference type="PRINTS" id="PR00460">
    <property type="entry name" value="BPEROXIDASE"/>
</dbReference>
<dbReference type="PRINTS" id="PR00458">
    <property type="entry name" value="PEROXIDASE"/>
</dbReference>
<dbReference type="SUPFAM" id="SSF48113">
    <property type="entry name" value="Heme-dependent peroxidases"/>
    <property type="match status" value="2"/>
</dbReference>
<dbReference type="PROSITE" id="PS00435">
    <property type="entry name" value="PEROXIDASE_1"/>
    <property type="match status" value="1"/>
</dbReference>
<dbReference type="PROSITE" id="PS00436">
    <property type="entry name" value="PEROXIDASE_2"/>
    <property type="match status" value="1"/>
</dbReference>
<dbReference type="PROSITE" id="PS50873">
    <property type="entry name" value="PEROXIDASE_4"/>
    <property type="match status" value="1"/>
</dbReference>